<comment type="subcellular location">
    <subcellularLocation>
        <location>Fimbrium</location>
    </subcellularLocation>
</comment>
<keyword id="KW-0903">Direct protein sequencing</keyword>
<keyword id="KW-0281">Fimbrium</keyword>
<name>FF21_SALEN</name>
<accession>P55224</accession>
<organism>
    <name type="scientific">Salmonella enteritidis</name>
    <dbReference type="NCBI Taxonomy" id="149539"/>
    <lineage>
        <taxon>Bacteria</taxon>
        <taxon>Pseudomonadati</taxon>
        <taxon>Pseudomonadota</taxon>
        <taxon>Gammaproteobacteria</taxon>
        <taxon>Enterobacterales</taxon>
        <taxon>Enterobacteriaceae</taxon>
        <taxon>Salmonella</taxon>
    </lineage>
</organism>
<proteinExistence type="evidence at protein level"/>
<protein>
    <recommendedName>
        <fullName>Fimbrin sef21</fullName>
        <shortName>SEF 21</shortName>
    </recommendedName>
</protein>
<feature type="chain" id="PRO_0000196351" description="Fimbrin sef21">
    <location>
        <begin position="1"/>
        <end position="32" status="greater than"/>
    </location>
</feature>
<feature type="non-terminal residue">
    <location>
        <position position="32"/>
    </location>
</feature>
<dbReference type="PIR" id="A44900">
    <property type="entry name" value="A44900"/>
</dbReference>
<dbReference type="GO" id="GO:0009289">
    <property type="term" value="C:pilus"/>
    <property type="evidence" value="ECO:0007669"/>
    <property type="project" value="UniProtKB-SubCell"/>
</dbReference>
<sequence length="32" mass="3132">ADPTPVSVSGGTIHFEGKLVNAAAXVSXXSAD</sequence>
<reference key="1">
    <citation type="journal article" date="1991" name="J. Bacteriol.">
        <title>Type 1 fimbriae of Salmonella enteritidis.</title>
        <authorList>
            <person name="Mueller K.-H."/>
            <person name="Collinson S.K."/>
            <person name="Trust T.J."/>
            <person name="Kay W.W."/>
        </authorList>
    </citation>
    <scope>PROTEIN SEQUENCE</scope>
    <source>
        <strain>27655-3B</strain>
    </source>
</reference>